<name>ATPH_MORIN</name>
<organism>
    <name type="scientific">Morus indica</name>
    <name type="common">Mulberry</name>
    <dbReference type="NCBI Taxonomy" id="248361"/>
    <lineage>
        <taxon>Eukaryota</taxon>
        <taxon>Viridiplantae</taxon>
        <taxon>Streptophyta</taxon>
        <taxon>Embryophyta</taxon>
        <taxon>Tracheophyta</taxon>
        <taxon>Spermatophyta</taxon>
        <taxon>Magnoliopsida</taxon>
        <taxon>eudicotyledons</taxon>
        <taxon>Gunneridae</taxon>
        <taxon>Pentapetalae</taxon>
        <taxon>rosids</taxon>
        <taxon>fabids</taxon>
        <taxon>Rosales</taxon>
        <taxon>Moraceae</taxon>
        <taxon>Moreae</taxon>
        <taxon>Morus</taxon>
    </lineage>
</organism>
<sequence length="81" mass="7990">MNPLISAASVIAAGLAVGLASIGPGVGQGTAAGQAVEGIARQPEAEGKIRGTLLLSLAFMEALTIYGLVVALALLFANPFV</sequence>
<geneLocation type="chloroplast"/>
<keyword id="KW-0066">ATP synthesis</keyword>
<keyword id="KW-0138">CF(0)</keyword>
<keyword id="KW-0150">Chloroplast</keyword>
<keyword id="KW-0375">Hydrogen ion transport</keyword>
<keyword id="KW-0406">Ion transport</keyword>
<keyword id="KW-0446">Lipid-binding</keyword>
<keyword id="KW-0472">Membrane</keyword>
<keyword id="KW-0934">Plastid</keyword>
<keyword id="KW-0793">Thylakoid</keyword>
<keyword id="KW-0812">Transmembrane</keyword>
<keyword id="KW-1133">Transmembrane helix</keyword>
<keyword id="KW-0813">Transport</keyword>
<evidence type="ECO:0000255" key="1">
    <source>
        <dbReference type="HAMAP-Rule" id="MF_01396"/>
    </source>
</evidence>
<gene>
    <name evidence="1" type="primary">atpH</name>
    <name type="ordered locus">MoinCp008</name>
</gene>
<comment type="function">
    <text evidence="1">F(1)F(0) ATP synthase produces ATP from ADP in the presence of a proton or sodium gradient. F-type ATPases consist of two structural domains, F(1) containing the extramembraneous catalytic core and F(0) containing the membrane proton channel, linked together by a central stalk and a peripheral stalk. During catalysis, ATP synthesis in the catalytic domain of F(1) is coupled via a rotary mechanism of the central stalk subunits to proton translocation.</text>
</comment>
<comment type="function">
    <text evidence="1">Key component of the F(0) channel; it plays a direct role in translocation across the membrane. A homomeric c-ring of between 10-14 subunits forms the central stalk rotor element with the F(1) delta and epsilon subunits.</text>
</comment>
<comment type="subunit">
    <text evidence="1">F-type ATPases have 2 components, F(1) - the catalytic core - and F(0) - the membrane proton channel. F(1) has five subunits: alpha(3), beta(3), gamma(1), delta(1), epsilon(1). F(0) has four main subunits: a(1), b(1), b'(1) and c(10-14). The alpha and beta chains form an alternating ring which encloses part of the gamma chain. F(1) is attached to F(0) by a central stalk formed by the gamma and epsilon chains, while a peripheral stalk is formed by the delta, b and b' chains.</text>
</comment>
<comment type="subcellular location">
    <subcellularLocation>
        <location evidence="1">Plastid</location>
        <location evidence="1">Chloroplast thylakoid membrane</location>
        <topology evidence="1">Multi-pass membrane protein</topology>
    </subcellularLocation>
</comment>
<comment type="miscellaneous">
    <text>In plastids the F-type ATPase is also known as CF(1)CF(0).</text>
</comment>
<comment type="similarity">
    <text evidence="1">Belongs to the ATPase C chain family.</text>
</comment>
<dbReference type="EMBL" id="DQ226511">
    <property type="protein sequence ID" value="ABB20945.1"/>
    <property type="molecule type" value="Genomic_DNA"/>
</dbReference>
<dbReference type="RefSeq" id="YP_762248.1">
    <property type="nucleotide sequence ID" value="NC_008359.1"/>
</dbReference>
<dbReference type="SMR" id="Q09X30"/>
<dbReference type="GeneID" id="4290591"/>
<dbReference type="GO" id="GO:0009535">
    <property type="term" value="C:chloroplast thylakoid membrane"/>
    <property type="evidence" value="ECO:0007669"/>
    <property type="project" value="UniProtKB-SubCell"/>
</dbReference>
<dbReference type="GO" id="GO:0045259">
    <property type="term" value="C:proton-transporting ATP synthase complex"/>
    <property type="evidence" value="ECO:0007669"/>
    <property type="project" value="UniProtKB-KW"/>
</dbReference>
<dbReference type="GO" id="GO:0033177">
    <property type="term" value="C:proton-transporting two-sector ATPase complex, proton-transporting domain"/>
    <property type="evidence" value="ECO:0007669"/>
    <property type="project" value="InterPro"/>
</dbReference>
<dbReference type="GO" id="GO:0008289">
    <property type="term" value="F:lipid binding"/>
    <property type="evidence" value="ECO:0007669"/>
    <property type="project" value="UniProtKB-KW"/>
</dbReference>
<dbReference type="GO" id="GO:0046933">
    <property type="term" value="F:proton-transporting ATP synthase activity, rotational mechanism"/>
    <property type="evidence" value="ECO:0007669"/>
    <property type="project" value="UniProtKB-UniRule"/>
</dbReference>
<dbReference type="CDD" id="cd18183">
    <property type="entry name" value="ATP-synt_Fo_c_ATPH"/>
    <property type="match status" value="1"/>
</dbReference>
<dbReference type="FunFam" id="1.20.20.10:FF:000001">
    <property type="entry name" value="ATP synthase subunit c, chloroplastic"/>
    <property type="match status" value="1"/>
</dbReference>
<dbReference type="Gene3D" id="1.20.20.10">
    <property type="entry name" value="F1F0 ATP synthase subunit C"/>
    <property type="match status" value="1"/>
</dbReference>
<dbReference type="HAMAP" id="MF_01396">
    <property type="entry name" value="ATP_synth_c_bact"/>
    <property type="match status" value="1"/>
</dbReference>
<dbReference type="InterPro" id="IPR005953">
    <property type="entry name" value="ATP_synth_csu_bac/chlpt"/>
</dbReference>
<dbReference type="InterPro" id="IPR000454">
    <property type="entry name" value="ATP_synth_F0_csu"/>
</dbReference>
<dbReference type="InterPro" id="IPR020537">
    <property type="entry name" value="ATP_synth_F0_csu_DDCD_BS"/>
</dbReference>
<dbReference type="InterPro" id="IPR038662">
    <property type="entry name" value="ATP_synth_F0_csu_sf"/>
</dbReference>
<dbReference type="InterPro" id="IPR002379">
    <property type="entry name" value="ATPase_proteolipid_c-like_dom"/>
</dbReference>
<dbReference type="InterPro" id="IPR035921">
    <property type="entry name" value="F/V-ATP_Csub_sf"/>
</dbReference>
<dbReference type="NCBIfam" id="TIGR01260">
    <property type="entry name" value="ATP_synt_c"/>
    <property type="match status" value="1"/>
</dbReference>
<dbReference type="NCBIfam" id="NF005608">
    <property type="entry name" value="PRK07354.1"/>
    <property type="match status" value="1"/>
</dbReference>
<dbReference type="PANTHER" id="PTHR10031">
    <property type="entry name" value="ATP SYNTHASE LIPID-BINDING PROTEIN, MITOCHONDRIAL"/>
    <property type="match status" value="1"/>
</dbReference>
<dbReference type="PANTHER" id="PTHR10031:SF0">
    <property type="entry name" value="ATPASE PROTEIN 9"/>
    <property type="match status" value="1"/>
</dbReference>
<dbReference type="Pfam" id="PF00137">
    <property type="entry name" value="ATP-synt_C"/>
    <property type="match status" value="1"/>
</dbReference>
<dbReference type="PRINTS" id="PR00124">
    <property type="entry name" value="ATPASEC"/>
</dbReference>
<dbReference type="SUPFAM" id="SSF81333">
    <property type="entry name" value="F1F0 ATP synthase subunit C"/>
    <property type="match status" value="1"/>
</dbReference>
<dbReference type="PROSITE" id="PS00605">
    <property type="entry name" value="ATPASE_C"/>
    <property type="match status" value="1"/>
</dbReference>
<proteinExistence type="inferred from homology"/>
<accession>Q09X30</accession>
<feature type="chain" id="PRO_0000362935" description="ATP synthase subunit c, chloroplastic">
    <location>
        <begin position="1"/>
        <end position="81"/>
    </location>
</feature>
<feature type="transmembrane region" description="Helical" evidence="1">
    <location>
        <begin position="3"/>
        <end position="23"/>
    </location>
</feature>
<feature type="transmembrane region" description="Helical" evidence="1">
    <location>
        <begin position="57"/>
        <end position="77"/>
    </location>
</feature>
<feature type="site" description="Reversibly protonated during proton transport" evidence="1">
    <location>
        <position position="61"/>
    </location>
</feature>
<reference key="1">
    <citation type="submission" date="2005-09" db="EMBL/GenBank/DDBJ databases">
        <title>The chloroplast genome of mulberry: structural features and comparative analysis.</title>
        <authorList>
            <person name="Ravi V."/>
            <person name="Khurana J.P."/>
            <person name="Tyagi A.K."/>
            <person name="Khurana P."/>
        </authorList>
    </citation>
    <scope>NUCLEOTIDE SEQUENCE [LARGE SCALE GENOMIC DNA]</scope>
    <source>
        <strain>cv. K2</strain>
    </source>
</reference>
<protein>
    <recommendedName>
        <fullName evidence="1">ATP synthase subunit c, chloroplastic</fullName>
    </recommendedName>
    <alternativeName>
        <fullName evidence="1">ATP synthase F(0) sector subunit c</fullName>
    </alternativeName>
    <alternativeName>
        <fullName evidence="1">ATPase subunit III</fullName>
    </alternativeName>
    <alternativeName>
        <fullName evidence="1">F-type ATPase subunit c</fullName>
        <shortName evidence="1">F-ATPase subunit c</shortName>
    </alternativeName>
    <alternativeName>
        <fullName evidence="1">Lipid-binding protein</fullName>
    </alternativeName>
</protein>